<comment type="similarity">
    <text evidence="1">Belongs to the bacterial ribosomal protein bL32 family.</text>
</comment>
<accession>B0KF52</accession>
<proteinExistence type="inferred from homology"/>
<gene>
    <name evidence="1" type="primary">rpmF</name>
    <name type="ordered locus">PputGB1_1487</name>
</gene>
<organism>
    <name type="scientific">Pseudomonas putida (strain GB-1)</name>
    <dbReference type="NCBI Taxonomy" id="76869"/>
    <lineage>
        <taxon>Bacteria</taxon>
        <taxon>Pseudomonadati</taxon>
        <taxon>Pseudomonadota</taxon>
        <taxon>Gammaproteobacteria</taxon>
        <taxon>Pseudomonadales</taxon>
        <taxon>Pseudomonadaceae</taxon>
        <taxon>Pseudomonas</taxon>
    </lineage>
</organism>
<protein>
    <recommendedName>
        <fullName evidence="1">Large ribosomal subunit protein bL32</fullName>
    </recommendedName>
    <alternativeName>
        <fullName evidence="3">50S ribosomal protein L32</fullName>
    </alternativeName>
</protein>
<feature type="chain" id="PRO_1000079339" description="Large ribosomal subunit protein bL32">
    <location>
        <begin position="1"/>
        <end position="60"/>
    </location>
</feature>
<feature type="region of interest" description="Disordered" evidence="2">
    <location>
        <begin position="1"/>
        <end position="60"/>
    </location>
</feature>
<feature type="compositionally biased region" description="Basic and acidic residues" evidence="2">
    <location>
        <begin position="11"/>
        <end position="22"/>
    </location>
</feature>
<dbReference type="EMBL" id="CP000926">
    <property type="protein sequence ID" value="ABY97392.1"/>
    <property type="molecule type" value="Genomic_DNA"/>
</dbReference>
<dbReference type="RefSeq" id="WP_003247154.1">
    <property type="nucleotide sequence ID" value="NC_010322.1"/>
</dbReference>
<dbReference type="SMR" id="B0KF52"/>
<dbReference type="GeneID" id="97166971"/>
<dbReference type="KEGG" id="ppg:PputGB1_1487"/>
<dbReference type="eggNOG" id="COG0333">
    <property type="taxonomic scope" value="Bacteria"/>
</dbReference>
<dbReference type="HOGENOM" id="CLU_129084_2_1_6"/>
<dbReference type="Proteomes" id="UP000002157">
    <property type="component" value="Chromosome"/>
</dbReference>
<dbReference type="GO" id="GO:0015934">
    <property type="term" value="C:large ribosomal subunit"/>
    <property type="evidence" value="ECO:0007669"/>
    <property type="project" value="InterPro"/>
</dbReference>
<dbReference type="GO" id="GO:0003735">
    <property type="term" value="F:structural constituent of ribosome"/>
    <property type="evidence" value="ECO:0007669"/>
    <property type="project" value="InterPro"/>
</dbReference>
<dbReference type="GO" id="GO:0006412">
    <property type="term" value="P:translation"/>
    <property type="evidence" value="ECO:0007669"/>
    <property type="project" value="UniProtKB-UniRule"/>
</dbReference>
<dbReference type="HAMAP" id="MF_00340">
    <property type="entry name" value="Ribosomal_bL32"/>
    <property type="match status" value="1"/>
</dbReference>
<dbReference type="InterPro" id="IPR002677">
    <property type="entry name" value="Ribosomal_bL32"/>
</dbReference>
<dbReference type="InterPro" id="IPR044957">
    <property type="entry name" value="Ribosomal_bL32_bact"/>
</dbReference>
<dbReference type="InterPro" id="IPR011332">
    <property type="entry name" value="Ribosomal_zn-bd"/>
</dbReference>
<dbReference type="NCBIfam" id="TIGR01031">
    <property type="entry name" value="rpmF_bact"/>
    <property type="match status" value="1"/>
</dbReference>
<dbReference type="PANTHER" id="PTHR35534">
    <property type="entry name" value="50S RIBOSOMAL PROTEIN L32"/>
    <property type="match status" value="1"/>
</dbReference>
<dbReference type="PANTHER" id="PTHR35534:SF1">
    <property type="entry name" value="LARGE RIBOSOMAL SUBUNIT PROTEIN BL32"/>
    <property type="match status" value="1"/>
</dbReference>
<dbReference type="Pfam" id="PF01783">
    <property type="entry name" value="Ribosomal_L32p"/>
    <property type="match status" value="1"/>
</dbReference>
<dbReference type="SUPFAM" id="SSF57829">
    <property type="entry name" value="Zn-binding ribosomal proteins"/>
    <property type="match status" value="1"/>
</dbReference>
<sequence>MAVQQNKKSRSARDMRRSHDALSENALSVEKTTGEVHLRHHVSPEGVYRGRKVVDKGADE</sequence>
<keyword id="KW-0687">Ribonucleoprotein</keyword>
<keyword id="KW-0689">Ribosomal protein</keyword>
<name>RL32_PSEPG</name>
<reference key="1">
    <citation type="submission" date="2008-01" db="EMBL/GenBank/DDBJ databases">
        <title>Complete sequence of Pseudomonas putida GB-1.</title>
        <authorList>
            <consortium name="US DOE Joint Genome Institute"/>
            <person name="Copeland A."/>
            <person name="Lucas S."/>
            <person name="Lapidus A."/>
            <person name="Barry K."/>
            <person name="Glavina del Rio T."/>
            <person name="Dalin E."/>
            <person name="Tice H."/>
            <person name="Pitluck S."/>
            <person name="Bruce D."/>
            <person name="Goodwin L."/>
            <person name="Chertkov O."/>
            <person name="Brettin T."/>
            <person name="Detter J.C."/>
            <person name="Han C."/>
            <person name="Kuske C.R."/>
            <person name="Schmutz J."/>
            <person name="Larimer F."/>
            <person name="Land M."/>
            <person name="Hauser L."/>
            <person name="Kyrpides N."/>
            <person name="Kim E."/>
            <person name="McCarthy J.K."/>
            <person name="Richardson P."/>
        </authorList>
    </citation>
    <scope>NUCLEOTIDE SEQUENCE [LARGE SCALE GENOMIC DNA]</scope>
    <source>
        <strain>GB-1</strain>
    </source>
</reference>
<evidence type="ECO:0000255" key="1">
    <source>
        <dbReference type="HAMAP-Rule" id="MF_00340"/>
    </source>
</evidence>
<evidence type="ECO:0000256" key="2">
    <source>
        <dbReference type="SAM" id="MobiDB-lite"/>
    </source>
</evidence>
<evidence type="ECO:0000305" key="3"/>